<feature type="chain" id="PRO_0000058352" description="Plasminogen-binding protein PgbB">
    <location>
        <begin position="1"/>
        <end position="541"/>
    </location>
</feature>
<feature type="region of interest" description="Disordered" evidence="2">
    <location>
        <begin position="420"/>
        <end position="541"/>
    </location>
</feature>
<feature type="compositionally biased region" description="Basic and acidic residues" evidence="2">
    <location>
        <begin position="420"/>
        <end position="434"/>
    </location>
</feature>
<feature type="compositionally biased region" description="Basic and acidic residues" evidence="2">
    <location>
        <begin position="446"/>
        <end position="455"/>
    </location>
</feature>
<feature type="compositionally biased region" description="Polar residues" evidence="2">
    <location>
        <begin position="456"/>
        <end position="476"/>
    </location>
</feature>
<feature type="compositionally biased region" description="Basic and acidic residues" evidence="2">
    <location>
        <begin position="480"/>
        <end position="541"/>
    </location>
</feature>
<proteinExistence type="inferred from homology"/>
<name>PGBB_HELPJ</name>
<organism>
    <name type="scientific">Helicobacter pylori (strain J99 / ATCC 700824)</name>
    <name type="common">Campylobacter pylori J99</name>
    <dbReference type="NCBI Taxonomy" id="85963"/>
    <lineage>
        <taxon>Bacteria</taxon>
        <taxon>Pseudomonadati</taxon>
        <taxon>Campylobacterota</taxon>
        <taxon>Epsilonproteobacteria</taxon>
        <taxon>Campylobacterales</taxon>
        <taxon>Helicobacteraceae</taxon>
        <taxon>Helicobacter</taxon>
    </lineage>
</organism>
<dbReference type="EMBL" id="AE001439">
    <property type="protein sequence ID" value="AAD06373.1"/>
    <property type="molecule type" value="Genomic_DNA"/>
</dbReference>
<dbReference type="PIR" id="H71887">
    <property type="entry name" value="H71887"/>
</dbReference>
<dbReference type="RefSeq" id="WP_001039534.1">
    <property type="nucleotide sequence ID" value="NC_000921.1"/>
</dbReference>
<dbReference type="SMR" id="Q9ZKY5"/>
<dbReference type="KEGG" id="hpj:jhp_0797"/>
<dbReference type="PATRIC" id="fig|85963.30.peg.175"/>
<dbReference type="eggNOG" id="ENOG50316V3">
    <property type="taxonomic scope" value="Bacteria"/>
</dbReference>
<dbReference type="Proteomes" id="UP000000804">
    <property type="component" value="Chromosome"/>
</dbReference>
<dbReference type="GO" id="GO:0009986">
    <property type="term" value="C:cell surface"/>
    <property type="evidence" value="ECO:0007669"/>
    <property type="project" value="UniProtKB-SubCell"/>
</dbReference>
<dbReference type="Gene3D" id="2.130.10.10">
    <property type="entry name" value="YVTN repeat-like/Quinoprotein amine dehydrogenase"/>
    <property type="match status" value="1"/>
</dbReference>
<dbReference type="InterPro" id="IPR032737">
    <property type="entry name" value="PGBA_C"/>
</dbReference>
<dbReference type="InterPro" id="IPR011047">
    <property type="entry name" value="Quinoprotein_ADH-like_sf"/>
</dbReference>
<dbReference type="InterPro" id="IPR015943">
    <property type="entry name" value="WD40/YVTN_repeat-like_dom_sf"/>
</dbReference>
<dbReference type="Pfam" id="PF15437">
    <property type="entry name" value="PGBA_C"/>
    <property type="match status" value="1"/>
</dbReference>
<dbReference type="SUPFAM" id="SSF50998">
    <property type="entry name" value="Quinoprotein alcohol dehydrogenase-like"/>
    <property type="match status" value="1"/>
</dbReference>
<dbReference type="PROSITE" id="PS51257">
    <property type="entry name" value="PROKAR_LIPOPROTEIN"/>
    <property type="match status" value="1"/>
</dbReference>
<comment type="function">
    <text evidence="1">Binds plasminogen, specifically, and in a concentration and lysine-dependent manner. Plasminogen is the precursor of plasmin, a serine protease that cleaves fibrin, fibronectin, laminin and vitronectin. Acquisition of plasminogen/plasmin could enable H.pylori to degrade host components (By similarity).</text>
</comment>
<comment type="subcellular location">
    <subcellularLocation>
        <location evidence="3">Cell surface</location>
    </subcellularLocation>
    <text evidence="3">The plasminogen-binding region is localized on the surface the bacterium.</text>
</comment>
<comment type="miscellaneous">
    <text evidence="1">Plasminogen bound to PgbB is capable of being converted to functionally active plasmin.</text>
</comment>
<accession>Q9ZKY5</accession>
<gene>
    <name type="primary">pgbB</name>
    <name type="ordered locus">jhp_0797</name>
</gene>
<protein>
    <recommendedName>
        <fullName>Plasminogen-binding protein PgbB</fullName>
    </recommendedName>
</protein>
<sequence>MNKPFLILLIALIAFSGCNMRKYFKPAKHQIKGEAYFPNHLQESIVSSNRYGAILKNGAVIGDKGLTQLRIGKNFNYESSFLNESQGFFILAQDCLNKIDKKTSKSRAAKTEETELKLKGVEAEVQDKVCHQVELISNNPNASQQSIVIPLETFALSASVKGNLLAVVLADNSANLYDITSQKLLFSEKGSPSTTINSLMAMPIFMDTVVVFPMLDGRLLVVDYVHGNPTPIRNIVISSDKFFNNITYLIVDGNNMIASTGKRILSVVSGQEFNYDGDIVDLLYDKGTLYVLTLDGQILQMDKSLRELNSVKLPFASLNTIVLNNNKLYSLEKRGYVIEVDLNDFDSYNVYKTPTIGSFKFFSSNRLDKGVFYDKNRVYYDRYYLDYNDFKPKLYPHAAEFKTSQKGEKGNAPIYLQERHKAKENKQPLEENKVKPRNSGFEEEEVKTRRPEPTKDQNNAIQQGETKNNESKNTPISKENAAKKEAPKPSSKEEKRRLKEEKKKAKAEQRAREFEQRAREHQERDEKELEERRKALEMNKK</sequence>
<evidence type="ECO:0000250" key="1"/>
<evidence type="ECO:0000256" key="2">
    <source>
        <dbReference type="SAM" id="MobiDB-lite"/>
    </source>
</evidence>
<evidence type="ECO:0000305" key="3"/>
<reference key="1">
    <citation type="journal article" date="1999" name="Nature">
        <title>Genomic sequence comparison of two unrelated isolates of the human gastric pathogen Helicobacter pylori.</title>
        <authorList>
            <person name="Alm R.A."/>
            <person name="Ling L.-S.L."/>
            <person name="Moir D.T."/>
            <person name="King B.L."/>
            <person name="Brown E.D."/>
            <person name="Doig P.C."/>
            <person name="Smith D.R."/>
            <person name="Noonan B."/>
            <person name="Guild B.C."/>
            <person name="deJonge B.L."/>
            <person name="Carmel G."/>
            <person name="Tummino P.J."/>
            <person name="Caruso A."/>
            <person name="Uria-Nickelsen M."/>
            <person name="Mills D.M."/>
            <person name="Ives C."/>
            <person name="Gibson R."/>
            <person name="Merberg D."/>
            <person name="Mills S.D."/>
            <person name="Jiang Q."/>
            <person name="Taylor D.E."/>
            <person name="Vovis G.F."/>
            <person name="Trust T.J."/>
        </authorList>
    </citation>
    <scope>NUCLEOTIDE SEQUENCE [LARGE SCALE GENOMIC DNA]</scope>
    <source>
        <strain>J99 / ATCC 700824</strain>
    </source>
</reference>